<accession>P22130</accession>
<reference key="1">
    <citation type="journal article" date="1992" name="Gene">
        <title>Sequence of the phosphoenolpyruvate carboxykinase-encoding cDNA from the rumen anaerobic fungus Neocallimastix frontalis: comparison of the amino acid sequence with animals and yeast.</title>
        <authorList>
            <person name="Reymond P."/>
            <person name="Geourjon C."/>
            <person name="Roux B."/>
            <person name="Durand R."/>
            <person name="Fevre M."/>
        </authorList>
    </citation>
    <scope>NUCLEOTIDE SEQUENCE [MRNA]</scope>
</reference>
<keyword id="KW-0210">Decarboxylase</keyword>
<keyword id="KW-0312">Gluconeogenesis</keyword>
<keyword id="KW-0342">GTP-binding</keyword>
<keyword id="KW-0456">Lyase</keyword>
<keyword id="KW-0464">Manganese</keyword>
<keyword id="KW-0479">Metal-binding</keyword>
<keyword id="KW-0547">Nucleotide-binding</keyword>
<sequence length="608" mass="66904">MAHSVSSVVNKQLLAYIKESSELMTPKDIYVCDGSAEEYHNLCELLVKQGIFTKLNETKRPNCYLARSNPADVARVEKCTYICSEKEEDAGPTNNWMAPAEMKAKLNGLMKGCMKGRTMYVIPFSMGPIGGPISRVGVEITDSPYVVVNMCIMAKVGKKVLDLLGVDGTFVPCTHSCLAPLEEGQKDSTWPCNIDNRYIVQFPEEHRIVSVGSGYGGNALLGKKCYALRIATVLSREAGDSLAEHMLILGITNPQGKKYYITAAFPSACGKTNLAMLNATIPGWKIECVGDDIAWLKIGKDGRLWAINPESGFFGVAPGTSYKSNPNAMKSCEKDTIFTNVALTEDGDVWWEGMTKEVPKGKIITWLGKEWSADSGEPKPNLAHPNSRFTARVENVPVGDPGYYALEGVPVSAMIFGGRRENTVPLVFQSRSWKHGVLLGSSVASETTAAAEAAAGQLRFDPFAMLPFCGYNMGDYFGYWLSFADKYDEAKLPKIFHVNWFRKDNGRFLWPGYGENSRVLKWIIERVEGKEGIAKETPIGYLPAKGALDLSGLDVPEADMEKILTVDCKAYLSEVEKIRQYHSKFGSLLPKALIAELDALEQRLKAAL</sequence>
<proteinExistence type="evidence at transcript level"/>
<evidence type="ECO:0000250" key="1"/>
<evidence type="ECO:0000250" key="2">
    <source>
        <dbReference type="UniProtKB" id="P07379"/>
    </source>
</evidence>
<evidence type="ECO:0000305" key="3"/>
<organism>
    <name type="scientific">Neocallimastix frontalis</name>
    <name type="common">Rumen fungus</name>
    <dbReference type="NCBI Taxonomy" id="4757"/>
    <lineage>
        <taxon>Eukaryota</taxon>
        <taxon>Fungi</taxon>
        <taxon>Fungi incertae sedis</taxon>
        <taxon>Chytridiomycota</taxon>
        <taxon>Chytridiomycota incertae sedis</taxon>
        <taxon>Neocallimastigomycetes</taxon>
        <taxon>Neocallimastigales</taxon>
        <taxon>Neocallimastigaceae</taxon>
        <taxon>Neocallimastix</taxon>
    </lineage>
</organism>
<comment type="function">
    <text evidence="1">Catalyzes the conversion of oxaloacetate (OAA) to phosphoenolpyruvate (PEP), the rate-limiting step in the metabolic pathway that produces glucose from lactate and other precursors derived from the citric acid cycle.</text>
</comment>
<comment type="catalytic activity">
    <reaction>
        <text>oxaloacetate + GTP = phosphoenolpyruvate + GDP + CO2</text>
        <dbReference type="Rhea" id="RHEA:10388"/>
        <dbReference type="ChEBI" id="CHEBI:16452"/>
        <dbReference type="ChEBI" id="CHEBI:16526"/>
        <dbReference type="ChEBI" id="CHEBI:37565"/>
        <dbReference type="ChEBI" id="CHEBI:58189"/>
        <dbReference type="ChEBI" id="CHEBI:58702"/>
        <dbReference type="EC" id="4.1.1.32"/>
    </reaction>
</comment>
<comment type="cofactor">
    <cofactor evidence="1">
        <name>Mn(2+)</name>
        <dbReference type="ChEBI" id="CHEBI:29035"/>
    </cofactor>
    <text evidence="1">Binds 1 Mn(2+) ion per subunit.</text>
</comment>
<comment type="pathway">
    <text>Carbohydrate biosynthesis; gluconeogenesis.</text>
</comment>
<comment type="subunit">
    <text evidence="1">Monomer.</text>
</comment>
<comment type="similarity">
    <text evidence="3">Belongs to the phosphoenolpyruvate carboxykinase [GTP] family.</text>
</comment>
<protein>
    <recommendedName>
        <fullName>Phosphoenolpyruvate carboxykinase [GTP]</fullName>
        <shortName>PEPCK</shortName>
        <ecNumber>4.1.1.32</ecNumber>
    </recommendedName>
</protein>
<feature type="chain" id="PRO_0000103636" description="Phosphoenolpyruvate carboxykinase [GTP]">
    <location>
        <begin position="1"/>
        <end position="608"/>
    </location>
</feature>
<feature type="active site" evidence="2">
    <location>
        <position position="269"/>
    </location>
</feature>
<feature type="binding site" evidence="2">
    <location>
        <position position="75"/>
    </location>
    <ligand>
        <name>substrate</name>
    </ligand>
</feature>
<feature type="binding site" evidence="2">
    <location>
        <begin position="215"/>
        <end position="217"/>
    </location>
    <ligand>
        <name>substrate</name>
    </ligand>
</feature>
<feature type="binding site" evidence="2">
    <location>
        <position position="224"/>
    </location>
    <ligand>
        <name>Mn(2+)</name>
        <dbReference type="ChEBI" id="CHEBI:29035"/>
    </ligand>
</feature>
<feature type="binding site" evidence="2">
    <location>
        <position position="245"/>
    </location>
    <ligand>
        <name>Mn(2+)</name>
        <dbReference type="ChEBI" id="CHEBI:29035"/>
    </ligand>
</feature>
<feature type="binding site" evidence="2">
    <location>
        <position position="267"/>
    </location>
    <ligand>
        <name>substrate</name>
    </ligand>
</feature>
<feature type="binding site" evidence="2">
    <location>
        <begin position="268"/>
        <end position="273"/>
    </location>
    <ligand>
        <name>GTP</name>
        <dbReference type="ChEBI" id="CHEBI:37565"/>
    </ligand>
</feature>
<feature type="binding site" evidence="2">
    <location>
        <position position="292"/>
    </location>
    <ligand>
        <name>Mn(2+)</name>
        <dbReference type="ChEBI" id="CHEBI:29035"/>
    </ligand>
</feature>
<feature type="binding site" evidence="2">
    <location>
        <begin position="386"/>
        <end position="388"/>
    </location>
    <ligand>
        <name>substrate</name>
    </ligand>
</feature>
<feature type="binding site" evidence="2">
    <location>
        <position position="388"/>
    </location>
    <ligand>
        <name>GTP</name>
        <dbReference type="ChEBI" id="CHEBI:37565"/>
    </ligand>
</feature>
<feature type="binding site" evidence="2">
    <location>
        <position position="419"/>
    </location>
    <ligand>
        <name>GTP</name>
        <dbReference type="ChEBI" id="CHEBI:37565"/>
    </ligand>
</feature>
<feature type="binding site" evidence="2">
    <location>
        <begin position="513"/>
        <end position="516"/>
    </location>
    <ligand>
        <name>GTP</name>
        <dbReference type="ChEBI" id="CHEBI:37565"/>
    </ligand>
</feature>
<dbReference type="EC" id="4.1.1.32"/>
<dbReference type="EMBL" id="M59372">
    <property type="protein sequence ID" value="AAA33553.1"/>
    <property type="molecule type" value="mRNA"/>
</dbReference>
<dbReference type="PIR" id="JQ1462">
    <property type="entry name" value="JQ1462"/>
</dbReference>
<dbReference type="SMR" id="P22130"/>
<dbReference type="UniPathway" id="UPA00138"/>
<dbReference type="GO" id="GO:0005829">
    <property type="term" value="C:cytosol"/>
    <property type="evidence" value="ECO:0007669"/>
    <property type="project" value="TreeGrafter"/>
</dbReference>
<dbReference type="GO" id="GO:0005525">
    <property type="term" value="F:GTP binding"/>
    <property type="evidence" value="ECO:0007669"/>
    <property type="project" value="UniProtKB-KW"/>
</dbReference>
<dbReference type="GO" id="GO:0030145">
    <property type="term" value="F:manganese ion binding"/>
    <property type="evidence" value="ECO:0007669"/>
    <property type="project" value="TreeGrafter"/>
</dbReference>
<dbReference type="GO" id="GO:0004613">
    <property type="term" value="F:phosphoenolpyruvate carboxykinase (GTP) activity"/>
    <property type="evidence" value="ECO:0007669"/>
    <property type="project" value="UniProtKB-EC"/>
</dbReference>
<dbReference type="GO" id="GO:0071333">
    <property type="term" value="P:cellular response to glucose stimulus"/>
    <property type="evidence" value="ECO:0007669"/>
    <property type="project" value="TreeGrafter"/>
</dbReference>
<dbReference type="GO" id="GO:0006094">
    <property type="term" value="P:gluconeogenesis"/>
    <property type="evidence" value="ECO:0007669"/>
    <property type="project" value="UniProtKB-UniPathway"/>
</dbReference>
<dbReference type="GO" id="GO:0046327">
    <property type="term" value="P:glycerol biosynthetic process from pyruvate"/>
    <property type="evidence" value="ECO:0007669"/>
    <property type="project" value="TreeGrafter"/>
</dbReference>
<dbReference type="GO" id="GO:0006107">
    <property type="term" value="P:oxaloacetate metabolic process"/>
    <property type="evidence" value="ECO:0007669"/>
    <property type="project" value="TreeGrafter"/>
</dbReference>
<dbReference type="GO" id="GO:0019543">
    <property type="term" value="P:propionate catabolic process"/>
    <property type="evidence" value="ECO:0007669"/>
    <property type="project" value="TreeGrafter"/>
</dbReference>
<dbReference type="GO" id="GO:0033993">
    <property type="term" value="P:response to lipid"/>
    <property type="evidence" value="ECO:0007669"/>
    <property type="project" value="TreeGrafter"/>
</dbReference>
<dbReference type="GO" id="GO:0042594">
    <property type="term" value="P:response to starvation"/>
    <property type="evidence" value="ECO:0007669"/>
    <property type="project" value="TreeGrafter"/>
</dbReference>
<dbReference type="CDD" id="cd00819">
    <property type="entry name" value="PEPCK_GTP"/>
    <property type="match status" value="1"/>
</dbReference>
<dbReference type="FunFam" id="3.40.449.10:FF:000005">
    <property type="entry name" value="Phosphoenolpyruvate carboxykinase [GTP]"/>
    <property type="match status" value="1"/>
</dbReference>
<dbReference type="Gene3D" id="3.90.228.20">
    <property type="match status" value="1"/>
</dbReference>
<dbReference type="Gene3D" id="3.40.449.10">
    <property type="entry name" value="Phosphoenolpyruvate Carboxykinase, domain 1"/>
    <property type="match status" value="1"/>
</dbReference>
<dbReference type="Gene3D" id="2.170.8.10">
    <property type="entry name" value="Phosphoenolpyruvate Carboxykinase, domain 2"/>
    <property type="match status" value="1"/>
</dbReference>
<dbReference type="HAMAP" id="MF_00452">
    <property type="entry name" value="PEPCK_GTP"/>
    <property type="match status" value="1"/>
</dbReference>
<dbReference type="InterPro" id="IPR018091">
    <property type="entry name" value="PEP_carboxykin_GTP_CS"/>
</dbReference>
<dbReference type="InterPro" id="IPR013035">
    <property type="entry name" value="PEP_carboxykinase_C"/>
</dbReference>
<dbReference type="InterPro" id="IPR008209">
    <property type="entry name" value="PEP_carboxykinase_GTP"/>
</dbReference>
<dbReference type="InterPro" id="IPR035077">
    <property type="entry name" value="PEP_carboxykinase_GTP_C"/>
</dbReference>
<dbReference type="InterPro" id="IPR035078">
    <property type="entry name" value="PEP_carboxykinase_GTP_N"/>
</dbReference>
<dbReference type="InterPro" id="IPR008210">
    <property type="entry name" value="PEP_carboxykinase_N"/>
</dbReference>
<dbReference type="NCBIfam" id="NF003253">
    <property type="entry name" value="PRK04210.1"/>
    <property type="match status" value="1"/>
</dbReference>
<dbReference type="PANTHER" id="PTHR11561">
    <property type="entry name" value="PHOSPHOENOLPYRUVATE CARBOXYKINASE"/>
    <property type="match status" value="1"/>
</dbReference>
<dbReference type="PANTHER" id="PTHR11561:SF0">
    <property type="entry name" value="PHOSPHOENOLPYRUVATE CARBOXYKINASE [GTP]-RELATED"/>
    <property type="match status" value="1"/>
</dbReference>
<dbReference type="Pfam" id="PF00821">
    <property type="entry name" value="PEPCK_GTP"/>
    <property type="match status" value="1"/>
</dbReference>
<dbReference type="Pfam" id="PF17297">
    <property type="entry name" value="PEPCK_N"/>
    <property type="match status" value="1"/>
</dbReference>
<dbReference type="PIRSF" id="PIRSF001348">
    <property type="entry name" value="PEP_carboxykinase_GTP"/>
    <property type="match status" value="1"/>
</dbReference>
<dbReference type="SUPFAM" id="SSF68923">
    <property type="entry name" value="PEP carboxykinase N-terminal domain"/>
    <property type="match status" value="1"/>
</dbReference>
<dbReference type="SUPFAM" id="SSF53795">
    <property type="entry name" value="PEP carboxykinase-like"/>
    <property type="match status" value="1"/>
</dbReference>
<dbReference type="PROSITE" id="PS00505">
    <property type="entry name" value="PEPCK_GTP"/>
    <property type="match status" value="1"/>
</dbReference>
<name>PCKG_NEOFR</name>